<gene>
    <name evidence="1" type="primary">rplB</name>
    <name type="ordered locus">HP_1316</name>
</gene>
<reference key="1">
    <citation type="journal article" date="1997" name="Nature">
        <title>The complete genome sequence of the gastric pathogen Helicobacter pylori.</title>
        <authorList>
            <person name="Tomb J.-F."/>
            <person name="White O."/>
            <person name="Kerlavage A.R."/>
            <person name="Clayton R.A."/>
            <person name="Sutton G.G."/>
            <person name="Fleischmann R.D."/>
            <person name="Ketchum K.A."/>
            <person name="Klenk H.-P."/>
            <person name="Gill S.R."/>
            <person name="Dougherty B.A."/>
            <person name="Nelson K.E."/>
            <person name="Quackenbush J."/>
            <person name="Zhou L."/>
            <person name="Kirkness E.F."/>
            <person name="Peterson S.N."/>
            <person name="Loftus B.J."/>
            <person name="Richardson D.L."/>
            <person name="Dodson R.J."/>
            <person name="Khalak H.G."/>
            <person name="Glodek A."/>
            <person name="McKenney K."/>
            <person name="FitzGerald L.M."/>
            <person name="Lee N."/>
            <person name="Adams M.D."/>
            <person name="Hickey E.K."/>
            <person name="Berg D.E."/>
            <person name="Gocayne J.D."/>
            <person name="Utterback T.R."/>
            <person name="Peterson J.D."/>
            <person name="Kelley J.M."/>
            <person name="Cotton M.D."/>
            <person name="Weidman J.F."/>
            <person name="Fujii C."/>
            <person name="Bowman C."/>
            <person name="Watthey L."/>
            <person name="Wallin E."/>
            <person name="Hayes W.S."/>
            <person name="Borodovsky M."/>
            <person name="Karp P.D."/>
            <person name="Smith H.O."/>
            <person name="Fraser C.M."/>
            <person name="Venter J.C."/>
        </authorList>
    </citation>
    <scope>NUCLEOTIDE SEQUENCE [LARGE SCALE GENOMIC DNA]</scope>
    <source>
        <strain>ATCC 700392 / 26695</strain>
    </source>
</reference>
<comment type="function">
    <text evidence="1">One of the primary rRNA binding proteins. Required for association of the 30S and 50S subunits to form the 70S ribosome, for tRNA binding and peptide bond formation. It has been suggested to have peptidyltransferase activity; this is somewhat controversial. Makes several contacts with the 16S rRNA in the 70S ribosome.</text>
</comment>
<comment type="subunit">
    <text evidence="1">Part of the 50S ribosomal subunit. Forms a bridge to the 30S subunit in the 70S ribosome.</text>
</comment>
<comment type="similarity">
    <text evidence="1">Belongs to the universal ribosomal protein uL2 family.</text>
</comment>
<accession>P56030</accession>
<evidence type="ECO:0000255" key="1">
    <source>
        <dbReference type="HAMAP-Rule" id="MF_01320"/>
    </source>
</evidence>
<evidence type="ECO:0000256" key="2">
    <source>
        <dbReference type="SAM" id="MobiDB-lite"/>
    </source>
</evidence>
<evidence type="ECO:0000305" key="3"/>
<sequence length="276" mass="30271">MAIKTYKPYTPSRRFMSVLDSKDITAKSSVKGLLTKLKATAGRNNNGRITSRHKERGAKKLYRIIDFKRNKYNIEGKVAAIEYDPYRNARIALVVYPDGDKRYILQPSGLKVGDSVIAAEGGLDIKVGFAMKLKNIPIGTVVHNIEMHPGAGGQLARSAGMSAQIMGRENKYTIIRMPSSEMRYILSECMASVGVVGNEDFINVSIGKAGRNRHRGIRPQTRGSAMNPVDHPHGGGEGKTGTSGHPVSPWGTPAKGYKTRKKKASDKLIISRKKHK</sequence>
<organism>
    <name type="scientific">Helicobacter pylori (strain ATCC 700392 / 26695)</name>
    <name type="common">Campylobacter pylori</name>
    <dbReference type="NCBI Taxonomy" id="85962"/>
    <lineage>
        <taxon>Bacteria</taxon>
        <taxon>Pseudomonadati</taxon>
        <taxon>Campylobacterota</taxon>
        <taxon>Epsilonproteobacteria</taxon>
        <taxon>Campylobacterales</taxon>
        <taxon>Helicobacteraceae</taxon>
        <taxon>Helicobacter</taxon>
    </lineage>
</organism>
<proteinExistence type="inferred from homology"/>
<protein>
    <recommendedName>
        <fullName evidence="1">Large ribosomal subunit protein uL2</fullName>
    </recommendedName>
    <alternativeName>
        <fullName evidence="3">50S ribosomal protein L2</fullName>
    </alternativeName>
</protein>
<keyword id="KW-1185">Reference proteome</keyword>
<keyword id="KW-0687">Ribonucleoprotein</keyword>
<keyword id="KW-0689">Ribosomal protein</keyword>
<keyword id="KW-0694">RNA-binding</keyword>
<keyword id="KW-0699">rRNA-binding</keyword>
<dbReference type="EMBL" id="AE000511">
    <property type="protein sequence ID" value="AAD08355.1"/>
    <property type="molecule type" value="Genomic_DNA"/>
</dbReference>
<dbReference type="PIR" id="D64684">
    <property type="entry name" value="D64684"/>
</dbReference>
<dbReference type="RefSeq" id="NP_208108.1">
    <property type="nucleotide sequence ID" value="NC_000915.1"/>
</dbReference>
<dbReference type="RefSeq" id="WP_000985807.1">
    <property type="nucleotide sequence ID" value="NC_018939.1"/>
</dbReference>
<dbReference type="SMR" id="P56030"/>
<dbReference type="DIP" id="DIP-3298N"/>
<dbReference type="FunCoup" id="P56030">
    <property type="interactions" value="476"/>
</dbReference>
<dbReference type="IntAct" id="P56030">
    <property type="interactions" value="7"/>
</dbReference>
<dbReference type="MINT" id="P56030"/>
<dbReference type="STRING" id="85962.HP_1316"/>
<dbReference type="PaxDb" id="85962-C694_06795"/>
<dbReference type="EnsemblBacteria" id="AAD08355">
    <property type="protein sequence ID" value="AAD08355"/>
    <property type="gene ID" value="HP_1316"/>
</dbReference>
<dbReference type="KEGG" id="heo:C694_06795"/>
<dbReference type="KEGG" id="hpy:HP_1316"/>
<dbReference type="PATRIC" id="fig|85962.47.peg.1410"/>
<dbReference type="eggNOG" id="COG0090">
    <property type="taxonomic scope" value="Bacteria"/>
</dbReference>
<dbReference type="InParanoid" id="P56030"/>
<dbReference type="OrthoDB" id="9778722at2"/>
<dbReference type="PhylomeDB" id="P56030"/>
<dbReference type="Proteomes" id="UP000000429">
    <property type="component" value="Chromosome"/>
</dbReference>
<dbReference type="GO" id="GO:0022625">
    <property type="term" value="C:cytosolic large ribosomal subunit"/>
    <property type="evidence" value="ECO:0000318"/>
    <property type="project" value="GO_Central"/>
</dbReference>
<dbReference type="GO" id="GO:0003723">
    <property type="term" value="F:RNA binding"/>
    <property type="evidence" value="ECO:0000318"/>
    <property type="project" value="GO_Central"/>
</dbReference>
<dbReference type="GO" id="GO:0019843">
    <property type="term" value="F:rRNA binding"/>
    <property type="evidence" value="ECO:0007669"/>
    <property type="project" value="UniProtKB-UniRule"/>
</dbReference>
<dbReference type="GO" id="GO:0003735">
    <property type="term" value="F:structural constituent of ribosome"/>
    <property type="evidence" value="ECO:0000318"/>
    <property type="project" value="GO_Central"/>
</dbReference>
<dbReference type="GO" id="GO:0016740">
    <property type="term" value="F:transferase activity"/>
    <property type="evidence" value="ECO:0007669"/>
    <property type="project" value="InterPro"/>
</dbReference>
<dbReference type="GO" id="GO:0002181">
    <property type="term" value="P:cytoplasmic translation"/>
    <property type="evidence" value="ECO:0000318"/>
    <property type="project" value="GO_Central"/>
</dbReference>
<dbReference type="FunFam" id="2.30.30.30:FF:000001">
    <property type="entry name" value="50S ribosomal protein L2"/>
    <property type="match status" value="1"/>
</dbReference>
<dbReference type="FunFam" id="2.40.50.140:FF:000003">
    <property type="entry name" value="50S ribosomal protein L2"/>
    <property type="match status" value="1"/>
</dbReference>
<dbReference type="FunFam" id="4.10.950.10:FF:000001">
    <property type="entry name" value="50S ribosomal protein L2"/>
    <property type="match status" value="1"/>
</dbReference>
<dbReference type="Gene3D" id="2.30.30.30">
    <property type="match status" value="1"/>
</dbReference>
<dbReference type="Gene3D" id="2.40.50.140">
    <property type="entry name" value="Nucleic acid-binding proteins"/>
    <property type="match status" value="1"/>
</dbReference>
<dbReference type="Gene3D" id="4.10.950.10">
    <property type="entry name" value="Ribosomal protein L2, domain 3"/>
    <property type="match status" value="1"/>
</dbReference>
<dbReference type="HAMAP" id="MF_01320_B">
    <property type="entry name" value="Ribosomal_uL2_B"/>
    <property type="match status" value="1"/>
</dbReference>
<dbReference type="InterPro" id="IPR012340">
    <property type="entry name" value="NA-bd_OB-fold"/>
</dbReference>
<dbReference type="InterPro" id="IPR014722">
    <property type="entry name" value="Rib_uL2_dom2"/>
</dbReference>
<dbReference type="InterPro" id="IPR002171">
    <property type="entry name" value="Ribosomal_uL2"/>
</dbReference>
<dbReference type="InterPro" id="IPR005880">
    <property type="entry name" value="Ribosomal_uL2_bac/org-type"/>
</dbReference>
<dbReference type="InterPro" id="IPR022669">
    <property type="entry name" value="Ribosomal_uL2_C"/>
</dbReference>
<dbReference type="InterPro" id="IPR022671">
    <property type="entry name" value="Ribosomal_uL2_CS"/>
</dbReference>
<dbReference type="InterPro" id="IPR014726">
    <property type="entry name" value="Ribosomal_uL2_dom3"/>
</dbReference>
<dbReference type="InterPro" id="IPR022666">
    <property type="entry name" value="Ribosomal_uL2_RNA-bd_dom"/>
</dbReference>
<dbReference type="InterPro" id="IPR008991">
    <property type="entry name" value="Translation_prot_SH3-like_sf"/>
</dbReference>
<dbReference type="NCBIfam" id="TIGR01171">
    <property type="entry name" value="rplB_bact"/>
    <property type="match status" value="1"/>
</dbReference>
<dbReference type="PANTHER" id="PTHR13691:SF5">
    <property type="entry name" value="LARGE RIBOSOMAL SUBUNIT PROTEIN UL2M"/>
    <property type="match status" value="1"/>
</dbReference>
<dbReference type="PANTHER" id="PTHR13691">
    <property type="entry name" value="RIBOSOMAL PROTEIN L2"/>
    <property type="match status" value="1"/>
</dbReference>
<dbReference type="Pfam" id="PF00181">
    <property type="entry name" value="Ribosomal_L2"/>
    <property type="match status" value="1"/>
</dbReference>
<dbReference type="Pfam" id="PF03947">
    <property type="entry name" value="Ribosomal_L2_C"/>
    <property type="match status" value="1"/>
</dbReference>
<dbReference type="PIRSF" id="PIRSF002158">
    <property type="entry name" value="Ribosomal_L2"/>
    <property type="match status" value="1"/>
</dbReference>
<dbReference type="SMART" id="SM01383">
    <property type="entry name" value="Ribosomal_L2"/>
    <property type="match status" value="1"/>
</dbReference>
<dbReference type="SMART" id="SM01382">
    <property type="entry name" value="Ribosomal_L2_C"/>
    <property type="match status" value="1"/>
</dbReference>
<dbReference type="SUPFAM" id="SSF50249">
    <property type="entry name" value="Nucleic acid-binding proteins"/>
    <property type="match status" value="1"/>
</dbReference>
<dbReference type="SUPFAM" id="SSF50104">
    <property type="entry name" value="Translation proteins SH3-like domain"/>
    <property type="match status" value="1"/>
</dbReference>
<dbReference type="PROSITE" id="PS00467">
    <property type="entry name" value="RIBOSOMAL_L2"/>
    <property type="match status" value="1"/>
</dbReference>
<name>RL2_HELPY</name>
<feature type="chain" id="PRO_0000129569" description="Large ribosomal subunit protein uL2">
    <location>
        <begin position="1"/>
        <end position="276"/>
    </location>
</feature>
<feature type="region of interest" description="Disordered" evidence="2">
    <location>
        <begin position="212"/>
        <end position="276"/>
    </location>
</feature>
<feature type="compositionally biased region" description="Basic residues" evidence="2">
    <location>
        <begin position="257"/>
        <end position="276"/>
    </location>
</feature>